<keyword id="KW-1185">Reference proteome</keyword>
<keyword id="KW-0687">Ribonucleoprotein</keyword>
<keyword id="KW-0689">Ribosomal protein</keyword>
<keyword id="KW-0694">RNA-binding</keyword>
<keyword id="KW-0699">rRNA-binding</keyword>
<gene>
    <name evidence="1" type="primary">rpl14</name>
    <name type="ordered locus">MA_1082</name>
</gene>
<evidence type="ECO:0000255" key="1">
    <source>
        <dbReference type="HAMAP-Rule" id="MF_01367"/>
    </source>
</evidence>
<evidence type="ECO:0000305" key="2"/>
<name>RL14_METAC</name>
<feature type="chain" id="PRO_0000266603" description="Large ribosomal subunit protein uL14">
    <location>
        <begin position="1"/>
        <end position="132"/>
    </location>
</feature>
<proteinExistence type="inferred from homology"/>
<organism>
    <name type="scientific">Methanosarcina acetivorans (strain ATCC 35395 / DSM 2834 / JCM 12185 / C2A)</name>
    <dbReference type="NCBI Taxonomy" id="188937"/>
    <lineage>
        <taxon>Archaea</taxon>
        <taxon>Methanobacteriati</taxon>
        <taxon>Methanobacteriota</taxon>
        <taxon>Stenosarchaea group</taxon>
        <taxon>Methanomicrobia</taxon>
        <taxon>Methanosarcinales</taxon>
        <taxon>Methanosarcinaceae</taxon>
        <taxon>Methanosarcina</taxon>
    </lineage>
</organism>
<protein>
    <recommendedName>
        <fullName evidence="1">Large ribosomal subunit protein uL14</fullName>
    </recommendedName>
    <alternativeName>
        <fullName evidence="2">50S ribosomal protein L14</fullName>
    </alternativeName>
</protein>
<reference key="1">
    <citation type="journal article" date="2002" name="Genome Res.">
        <title>The genome of Methanosarcina acetivorans reveals extensive metabolic and physiological diversity.</title>
        <authorList>
            <person name="Galagan J.E."/>
            <person name="Nusbaum C."/>
            <person name="Roy A."/>
            <person name="Endrizzi M.G."/>
            <person name="Macdonald P."/>
            <person name="FitzHugh W."/>
            <person name="Calvo S."/>
            <person name="Engels R."/>
            <person name="Smirnov S."/>
            <person name="Atnoor D."/>
            <person name="Brown A."/>
            <person name="Allen N."/>
            <person name="Naylor J."/>
            <person name="Stange-Thomann N."/>
            <person name="DeArellano K."/>
            <person name="Johnson R."/>
            <person name="Linton L."/>
            <person name="McEwan P."/>
            <person name="McKernan K."/>
            <person name="Talamas J."/>
            <person name="Tirrell A."/>
            <person name="Ye W."/>
            <person name="Zimmer A."/>
            <person name="Barber R.D."/>
            <person name="Cann I."/>
            <person name="Graham D.E."/>
            <person name="Grahame D.A."/>
            <person name="Guss A.M."/>
            <person name="Hedderich R."/>
            <person name="Ingram-Smith C."/>
            <person name="Kuettner H.C."/>
            <person name="Krzycki J.A."/>
            <person name="Leigh J.A."/>
            <person name="Li W."/>
            <person name="Liu J."/>
            <person name="Mukhopadhyay B."/>
            <person name="Reeve J.N."/>
            <person name="Smith K."/>
            <person name="Springer T.A."/>
            <person name="Umayam L.A."/>
            <person name="White O."/>
            <person name="White R.H."/>
            <person name="de Macario E.C."/>
            <person name="Ferry J.G."/>
            <person name="Jarrell K.F."/>
            <person name="Jing H."/>
            <person name="Macario A.J.L."/>
            <person name="Paulsen I.T."/>
            <person name="Pritchett M."/>
            <person name="Sowers K.R."/>
            <person name="Swanson R.V."/>
            <person name="Zinder S.H."/>
            <person name="Lander E."/>
            <person name="Metcalf W.W."/>
            <person name="Birren B."/>
        </authorList>
    </citation>
    <scope>NUCLEOTIDE SEQUENCE [LARGE SCALE GENOMIC DNA]</scope>
    <source>
        <strain>ATCC 35395 / DSM 2834 / JCM 12185 / C2A</strain>
    </source>
</reference>
<comment type="function">
    <text evidence="1">Binds to 23S rRNA. Forms part of two intersubunit bridges in the 70S ribosome.</text>
</comment>
<comment type="subunit">
    <text evidence="1">Part of the 50S ribosomal subunit. Forms a cluster with proteins L3 and L24e, part of which may contact the 16S rRNA in 2 intersubunit bridges.</text>
</comment>
<comment type="similarity">
    <text evidence="1">Belongs to the universal ribosomal protein uL14 family.</text>
</comment>
<dbReference type="EMBL" id="AE010299">
    <property type="protein sequence ID" value="AAM04507.1"/>
    <property type="molecule type" value="Genomic_DNA"/>
</dbReference>
<dbReference type="RefSeq" id="WP_011021111.1">
    <property type="nucleotide sequence ID" value="NC_003552.1"/>
</dbReference>
<dbReference type="SMR" id="Q8TRT7"/>
<dbReference type="FunCoup" id="Q8TRT7">
    <property type="interactions" value="211"/>
</dbReference>
<dbReference type="STRING" id="188937.MA_1082"/>
<dbReference type="EnsemblBacteria" id="AAM04507">
    <property type="protein sequence ID" value="AAM04507"/>
    <property type="gene ID" value="MA_1082"/>
</dbReference>
<dbReference type="GeneID" id="1472972"/>
<dbReference type="KEGG" id="mac:MA_1082"/>
<dbReference type="HOGENOM" id="CLU_095071_3_0_2"/>
<dbReference type="InParanoid" id="Q8TRT7"/>
<dbReference type="OrthoDB" id="23569at2157"/>
<dbReference type="PhylomeDB" id="Q8TRT7"/>
<dbReference type="Proteomes" id="UP000002487">
    <property type="component" value="Chromosome"/>
</dbReference>
<dbReference type="GO" id="GO:0022625">
    <property type="term" value="C:cytosolic large ribosomal subunit"/>
    <property type="evidence" value="ECO:0000318"/>
    <property type="project" value="GO_Central"/>
</dbReference>
<dbReference type="GO" id="GO:0070180">
    <property type="term" value="F:large ribosomal subunit rRNA binding"/>
    <property type="evidence" value="ECO:0000318"/>
    <property type="project" value="GO_Central"/>
</dbReference>
<dbReference type="GO" id="GO:0003735">
    <property type="term" value="F:structural constituent of ribosome"/>
    <property type="evidence" value="ECO:0000318"/>
    <property type="project" value="GO_Central"/>
</dbReference>
<dbReference type="GO" id="GO:0006412">
    <property type="term" value="P:translation"/>
    <property type="evidence" value="ECO:0007669"/>
    <property type="project" value="UniProtKB-UniRule"/>
</dbReference>
<dbReference type="CDD" id="cd00337">
    <property type="entry name" value="Ribosomal_uL14"/>
    <property type="match status" value="1"/>
</dbReference>
<dbReference type="FunFam" id="2.40.150.20:FF:000007">
    <property type="entry name" value="50S ribosomal protein L14"/>
    <property type="match status" value="1"/>
</dbReference>
<dbReference type="Gene3D" id="2.40.150.20">
    <property type="entry name" value="Ribosomal protein L14"/>
    <property type="match status" value="1"/>
</dbReference>
<dbReference type="HAMAP" id="MF_01367">
    <property type="entry name" value="Ribosomal_uL14"/>
    <property type="match status" value="1"/>
</dbReference>
<dbReference type="InterPro" id="IPR000218">
    <property type="entry name" value="Ribosomal_uL14"/>
</dbReference>
<dbReference type="InterPro" id="IPR019971">
    <property type="entry name" value="Ribosomal_uL14_arc"/>
</dbReference>
<dbReference type="InterPro" id="IPR019972">
    <property type="entry name" value="Ribosomal_uL14_CS"/>
</dbReference>
<dbReference type="InterPro" id="IPR036853">
    <property type="entry name" value="Ribosomal_uL14_sf"/>
</dbReference>
<dbReference type="NCBIfam" id="NF006344">
    <property type="entry name" value="PRK08571.1"/>
    <property type="match status" value="1"/>
</dbReference>
<dbReference type="NCBIfam" id="TIGR03673">
    <property type="entry name" value="uL14_arch"/>
    <property type="match status" value="1"/>
</dbReference>
<dbReference type="PANTHER" id="PTHR11761">
    <property type="entry name" value="50S/60S RIBOSOMAL PROTEIN L14/L23"/>
    <property type="match status" value="1"/>
</dbReference>
<dbReference type="PANTHER" id="PTHR11761:SF8">
    <property type="entry name" value="LARGE RIBOSOMAL SUBUNIT PROTEIN UL14"/>
    <property type="match status" value="1"/>
</dbReference>
<dbReference type="Pfam" id="PF00238">
    <property type="entry name" value="Ribosomal_L14"/>
    <property type="match status" value="1"/>
</dbReference>
<dbReference type="SMART" id="SM01374">
    <property type="entry name" value="Ribosomal_L14"/>
    <property type="match status" value="1"/>
</dbReference>
<dbReference type="SUPFAM" id="SSF50193">
    <property type="entry name" value="Ribosomal protein L14"/>
    <property type="match status" value="1"/>
</dbReference>
<dbReference type="PROSITE" id="PS00049">
    <property type="entry name" value="RIBOSOMAL_L14"/>
    <property type="match status" value="1"/>
</dbReference>
<accession>Q8TRT7</accession>
<sequence length="132" mass="14334">MKGMRSNIPRALNAGAQIACVDNTGAKVVEIISVKKYRGVKNRMPCAGIGDMCVVSVKKGTPEMRKQVLLAVVVRQKQEFRRPDGLHVSFEDNAMVITDEEGIPKGTDIKGPVAREVAERFPKIGTTASIIV</sequence>